<name>HXD4_ATEGE</name>
<dbReference type="EMBL" id="DQ976588">
    <property type="protein sequence ID" value="ABM65895.1"/>
    <property type="molecule type" value="Genomic_DNA"/>
</dbReference>
<dbReference type="BMRB" id="A2D4P8"/>
<dbReference type="SMR" id="A2D4P8"/>
<dbReference type="OrthoDB" id="6159439at2759"/>
<dbReference type="GO" id="GO:0005654">
    <property type="term" value="C:nucleoplasm"/>
    <property type="evidence" value="ECO:0007669"/>
    <property type="project" value="TreeGrafter"/>
</dbReference>
<dbReference type="GO" id="GO:0000981">
    <property type="term" value="F:DNA-binding transcription factor activity, RNA polymerase II-specific"/>
    <property type="evidence" value="ECO:0007669"/>
    <property type="project" value="InterPro"/>
</dbReference>
<dbReference type="GO" id="GO:0000978">
    <property type="term" value="F:RNA polymerase II cis-regulatory region sequence-specific DNA binding"/>
    <property type="evidence" value="ECO:0007669"/>
    <property type="project" value="TreeGrafter"/>
</dbReference>
<dbReference type="GO" id="GO:0009952">
    <property type="term" value="P:anterior/posterior pattern specification"/>
    <property type="evidence" value="ECO:0007669"/>
    <property type="project" value="TreeGrafter"/>
</dbReference>
<dbReference type="GO" id="GO:0048704">
    <property type="term" value="P:embryonic skeletal system morphogenesis"/>
    <property type="evidence" value="ECO:0007669"/>
    <property type="project" value="TreeGrafter"/>
</dbReference>
<dbReference type="GO" id="GO:0045944">
    <property type="term" value="P:positive regulation of transcription by RNA polymerase II"/>
    <property type="evidence" value="ECO:0007669"/>
    <property type="project" value="TreeGrafter"/>
</dbReference>
<dbReference type="CDD" id="cd00086">
    <property type="entry name" value="homeodomain"/>
    <property type="match status" value="1"/>
</dbReference>
<dbReference type="FunFam" id="1.10.10.60:FF:000029">
    <property type="entry name" value="Homeobox protein Hox-D4"/>
    <property type="match status" value="1"/>
</dbReference>
<dbReference type="Gene3D" id="1.10.10.60">
    <property type="entry name" value="Homeodomain-like"/>
    <property type="match status" value="1"/>
</dbReference>
<dbReference type="InterPro" id="IPR050609">
    <property type="entry name" value="Antp_homeobox_Deformed_sf"/>
</dbReference>
<dbReference type="InterPro" id="IPR001356">
    <property type="entry name" value="HD"/>
</dbReference>
<dbReference type="InterPro" id="IPR020479">
    <property type="entry name" value="HD_metazoa"/>
</dbReference>
<dbReference type="InterPro" id="IPR017995">
    <property type="entry name" value="Homeobox_antennapedia"/>
</dbReference>
<dbReference type="InterPro" id="IPR001827">
    <property type="entry name" value="Homeobox_Antennapedia_CS"/>
</dbReference>
<dbReference type="InterPro" id="IPR017970">
    <property type="entry name" value="Homeobox_CS"/>
</dbReference>
<dbReference type="InterPro" id="IPR009057">
    <property type="entry name" value="Homeodomain-like_sf"/>
</dbReference>
<dbReference type="PANTHER" id="PTHR45771:SF5">
    <property type="entry name" value="HOMEOBOX PROTEIN HOX-D4"/>
    <property type="match status" value="1"/>
</dbReference>
<dbReference type="PANTHER" id="PTHR45771">
    <property type="entry name" value="HOMEOTIC PROTEIN DEFORMED"/>
    <property type="match status" value="1"/>
</dbReference>
<dbReference type="Pfam" id="PF00046">
    <property type="entry name" value="Homeodomain"/>
    <property type="match status" value="1"/>
</dbReference>
<dbReference type="PRINTS" id="PR00025">
    <property type="entry name" value="ANTENNAPEDIA"/>
</dbReference>
<dbReference type="PRINTS" id="PR00024">
    <property type="entry name" value="HOMEOBOX"/>
</dbReference>
<dbReference type="SMART" id="SM00389">
    <property type="entry name" value="HOX"/>
    <property type="match status" value="1"/>
</dbReference>
<dbReference type="SUPFAM" id="SSF46689">
    <property type="entry name" value="Homeodomain-like"/>
    <property type="match status" value="1"/>
</dbReference>
<dbReference type="PROSITE" id="PS00032">
    <property type="entry name" value="ANTENNAPEDIA"/>
    <property type="match status" value="1"/>
</dbReference>
<dbReference type="PROSITE" id="PS00027">
    <property type="entry name" value="HOMEOBOX_1"/>
    <property type="match status" value="1"/>
</dbReference>
<dbReference type="PROSITE" id="PS50071">
    <property type="entry name" value="HOMEOBOX_2"/>
    <property type="match status" value="1"/>
</dbReference>
<keyword id="KW-0217">Developmental protein</keyword>
<keyword id="KW-0238">DNA-binding</keyword>
<keyword id="KW-0371">Homeobox</keyword>
<keyword id="KW-0539">Nucleus</keyword>
<keyword id="KW-0804">Transcription</keyword>
<keyword id="KW-0805">Transcription regulation</keyword>
<reference key="1">
    <citation type="submission" date="2006-08" db="EMBL/GenBank/DDBJ databases">
        <title>Positive selection in transcription factor genes on the human lineage.</title>
        <authorList>
            <person name="Nickel G.C."/>
            <person name="Tefft D.L."/>
            <person name="Trevarthen K."/>
            <person name="Funt J."/>
            <person name="Adams M.D."/>
        </authorList>
    </citation>
    <scope>NUCLEOTIDE SEQUENCE [GENOMIC DNA]</scope>
</reference>
<accession>A2D4P8</accession>
<protein>
    <recommendedName>
        <fullName>Homeobox protein Hox-D4</fullName>
    </recommendedName>
</protein>
<comment type="function">
    <text evidence="1">Sequence-specific transcription factor which is part of a developmental regulatory system that provides cells with specific positional identities on the anterior-posterior axis.</text>
</comment>
<comment type="subunit">
    <text evidence="2">Forms a DNA-binding heterodimer with transcription factor PBX1.</text>
</comment>
<comment type="subcellular location">
    <subcellularLocation>
        <location evidence="3">Nucleus</location>
    </subcellularLocation>
</comment>
<comment type="similarity">
    <text evidence="5">Belongs to the Antp homeobox family. Deformed subfamily.</text>
</comment>
<evidence type="ECO:0000250" key="1"/>
<evidence type="ECO:0000250" key="2">
    <source>
        <dbReference type="UniProtKB" id="P09016"/>
    </source>
</evidence>
<evidence type="ECO:0000255" key="3">
    <source>
        <dbReference type="PROSITE-ProRule" id="PRU00108"/>
    </source>
</evidence>
<evidence type="ECO:0000256" key="4">
    <source>
        <dbReference type="SAM" id="MobiDB-lite"/>
    </source>
</evidence>
<evidence type="ECO:0000305" key="5"/>
<sequence>MVMSSYMVNSKYVDPKFPPCEEYLQGGYLGEQGTDYYGGGAQGADFQPPGLYPRPDFGEQPFGGGGPGTRSALPARGHGQEPGGPGGHYAAPGEPCPAPPAPPPAPLPGARACSQSDPKQPPPGTALKQPAVVYPWMKKVHVNSVNPNYTGGEPKRSRTAYTRQQVLELEKEFHFNRYLTRRRRIEIAHTLCLSERQIKIWFQNRRMKWKKDHKLPNTKGRSSSSSSSSSCSSSTAPSQHLQPMAKDHHTDLTTL</sequence>
<gene>
    <name type="primary">HOXD4</name>
</gene>
<feature type="chain" id="PRO_0000285432" description="Homeobox protein Hox-D4">
    <location>
        <begin position="1"/>
        <end position="255"/>
    </location>
</feature>
<feature type="DNA-binding region" description="Homeobox" evidence="3">
    <location>
        <begin position="154"/>
        <end position="213"/>
    </location>
</feature>
<feature type="region of interest" description="Disordered" evidence="4">
    <location>
        <begin position="28"/>
        <end position="128"/>
    </location>
</feature>
<feature type="region of interest" description="Disordered" evidence="4">
    <location>
        <begin position="212"/>
        <end position="255"/>
    </location>
</feature>
<feature type="short sequence motif" description="Antp-type hexapeptide">
    <location>
        <begin position="133"/>
        <end position="138"/>
    </location>
</feature>
<feature type="compositionally biased region" description="Pro residues" evidence="4">
    <location>
        <begin position="94"/>
        <end position="107"/>
    </location>
</feature>
<feature type="compositionally biased region" description="Low complexity" evidence="4">
    <location>
        <begin position="222"/>
        <end position="234"/>
    </location>
</feature>
<feature type="compositionally biased region" description="Basic and acidic residues" evidence="4">
    <location>
        <begin position="245"/>
        <end position="255"/>
    </location>
</feature>
<proteinExistence type="inferred from homology"/>
<organism>
    <name type="scientific">Ateles geoffroyi</name>
    <name type="common">Black-handed spider monkey</name>
    <name type="synonym">Geoffroy's spider monkey</name>
    <dbReference type="NCBI Taxonomy" id="9509"/>
    <lineage>
        <taxon>Eukaryota</taxon>
        <taxon>Metazoa</taxon>
        <taxon>Chordata</taxon>
        <taxon>Craniata</taxon>
        <taxon>Vertebrata</taxon>
        <taxon>Euteleostomi</taxon>
        <taxon>Mammalia</taxon>
        <taxon>Eutheria</taxon>
        <taxon>Euarchontoglires</taxon>
        <taxon>Primates</taxon>
        <taxon>Haplorrhini</taxon>
        <taxon>Platyrrhini</taxon>
        <taxon>Atelidae</taxon>
        <taxon>Atelinae</taxon>
        <taxon>Ateles</taxon>
    </lineage>
</organism>